<sequence>MTIDGTGQSKEALQDERLNTGSDKVYQNYMMPALELYDAKVSINHWQLRDCIKPGSMNQSKLYYIYDHSIRVLDTDSSVLRSPVRRHNSIQPSNSGKNSTEKTSTKGSRTTGSYISKNLHVPSEKLVEFNFKPRCFTELNGLTVCGGLIGSDDKGFPSNWNRLAQDANISLPPPSQPINISKNISFPINSHYSNPNIWKGIVEFYNQETDTMMTFTLGQFINNCVTLYDRASMQFDLFACNNDGHLYQCDVSNRDVTLVKRYADLKFPLNNASLSHDGQTMVVSGDSNKFAVYNQNELTNQFSLHYDNHPSWGSSVNRVRRIPRFALPDESEYIENIYEAPNSDHGFYNSFSENDLQFATVFQNGTCAIYDIRNMATPMAEISSTRPHSHNGAFRVCRFSYGLDDLLFISEHQGRVHVVDTRNYVNHQVIVIPDKVNMEYINERKHNTNHNFTTNNNNENESNDSKNELQGADYRSLSRRRFSLPSMPNVTTEPWITMAQRIPKKYLEPQILPFPKVMDKISNESVLFSTKGSSSSDVAHPYKRRCSFRVRRVSTSAPTADYSNNNVNASLGTPAADSIATSSSNSAPQNLIDPLILSHQQASNDVFEDDEYYEAYNDVHSTYRVSSDYHGVSARAFESFLRPPSTPDLPSDDDNFAANSRNNRGTSNFLRRPVITTQESNEFSEENNISGIDWVEDRNGSSLIIGTDYGIMRWNINSWARRSFSSYDLC</sequence>
<keyword id="KW-0597">Phosphoprotein</keyword>
<keyword id="KW-1185">Reference proteome</keyword>
<organism>
    <name type="scientific">Saccharomyces cerevisiae (strain ATCC 204508 / S288c)</name>
    <name type="common">Baker's yeast</name>
    <dbReference type="NCBI Taxonomy" id="559292"/>
    <lineage>
        <taxon>Eukaryota</taxon>
        <taxon>Fungi</taxon>
        <taxon>Dikarya</taxon>
        <taxon>Ascomycota</taxon>
        <taxon>Saccharomycotina</taxon>
        <taxon>Saccharomycetes</taxon>
        <taxon>Saccharomycetales</taxon>
        <taxon>Saccharomycetaceae</taxon>
        <taxon>Saccharomyces</taxon>
    </lineage>
</organism>
<gene>
    <name type="ordered locus">YLR149C</name>
</gene>
<name>YL149_YEAST</name>
<protein>
    <recommendedName>
        <fullName>Uncharacterized protein YLR149C</fullName>
    </recommendedName>
</protein>
<reference key="1">
    <citation type="journal article" date="1997" name="Nature">
        <title>The nucleotide sequence of Saccharomyces cerevisiae chromosome XII.</title>
        <authorList>
            <person name="Johnston M."/>
            <person name="Hillier L.W."/>
            <person name="Riles L."/>
            <person name="Albermann K."/>
            <person name="Andre B."/>
            <person name="Ansorge W."/>
            <person name="Benes V."/>
            <person name="Brueckner M."/>
            <person name="Delius H."/>
            <person name="Dubois E."/>
            <person name="Duesterhoeft A."/>
            <person name="Entian K.-D."/>
            <person name="Floeth M."/>
            <person name="Goffeau A."/>
            <person name="Hebling U."/>
            <person name="Heumann K."/>
            <person name="Heuss-Neitzel D."/>
            <person name="Hilbert H."/>
            <person name="Hilger F."/>
            <person name="Kleine K."/>
            <person name="Koetter P."/>
            <person name="Louis E.J."/>
            <person name="Messenguy F."/>
            <person name="Mewes H.-W."/>
            <person name="Miosga T."/>
            <person name="Moestl D."/>
            <person name="Mueller-Auer S."/>
            <person name="Nentwich U."/>
            <person name="Obermaier B."/>
            <person name="Piravandi E."/>
            <person name="Pohl T.M."/>
            <person name="Portetelle D."/>
            <person name="Purnelle B."/>
            <person name="Rechmann S."/>
            <person name="Rieger M."/>
            <person name="Rinke M."/>
            <person name="Rose M."/>
            <person name="Scharfe M."/>
            <person name="Scherens B."/>
            <person name="Scholler P."/>
            <person name="Schwager C."/>
            <person name="Schwarz S."/>
            <person name="Underwood A.P."/>
            <person name="Urrestarazu L.A."/>
            <person name="Vandenbol M."/>
            <person name="Verhasselt P."/>
            <person name="Vierendeels F."/>
            <person name="Voet M."/>
            <person name="Volckaert G."/>
            <person name="Voss H."/>
            <person name="Wambutt R."/>
            <person name="Wedler E."/>
            <person name="Wedler H."/>
            <person name="Zimmermann F.K."/>
            <person name="Zollner A."/>
            <person name="Hani J."/>
            <person name="Hoheisel J.D."/>
        </authorList>
    </citation>
    <scope>NUCLEOTIDE SEQUENCE [LARGE SCALE GENOMIC DNA]</scope>
    <source>
        <strain>ATCC 204508 / S288c</strain>
    </source>
</reference>
<reference key="2">
    <citation type="journal article" date="2014" name="G3 (Bethesda)">
        <title>The reference genome sequence of Saccharomyces cerevisiae: Then and now.</title>
        <authorList>
            <person name="Engel S.R."/>
            <person name="Dietrich F.S."/>
            <person name="Fisk D.G."/>
            <person name="Binkley G."/>
            <person name="Balakrishnan R."/>
            <person name="Costanzo M.C."/>
            <person name="Dwight S.S."/>
            <person name="Hitz B.C."/>
            <person name="Karra K."/>
            <person name="Nash R.S."/>
            <person name="Weng S."/>
            <person name="Wong E.D."/>
            <person name="Lloyd P."/>
            <person name="Skrzypek M.S."/>
            <person name="Miyasato S.R."/>
            <person name="Simison M."/>
            <person name="Cherry J.M."/>
        </authorList>
    </citation>
    <scope>GENOME REANNOTATION</scope>
    <source>
        <strain>ATCC 204508 / S288c</strain>
    </source>
</reference>
<reference key="3">
    <citation type="journal article" date="2007" name="J. Proteome Res.">
        <title>Large-scale phosphorylation analysis of alpha-factor-arrested Saccharomyces cerevisiae.</title>
        <authorList>
            <person name="Li X."/>
            <person name="Gerber S.A."/>
            <person name="Rudner A.D."/>
            <person name="Beausoleil S.A."/>
            <person name="Haas W."/>
            <person name="Villen J."/>
            <person name="Elias J.E."/>
            <person name="Gygi S.P."/>
        </authorList>
    </citation>
    <scope>PHOSPHORYLATION [LARGE SCALE ANALYSIS] AT SER-82</scope>
    <scope>IDENTIFICATION BY MASS SPECTROMETRY [LARGE SCALE ANALYSIS]</scope>
    <source>
        <strain>ADR376</strain>
    </source>
</reference>
<reference key="4">
    <citation type="journal article" date="2008" name="Mol. Cell. Proteomics">
        <title>A multidimensional chromatography technology for in-depth phosphoproteome analysis.</title>
        <authorList>
            <person name="Albuquerque C.P."/>
            <person name="Smolka M.B."/>
            <person name="Payne S.H."/>
            <person name="Bafna V."/>
            <person name="Eng J."/>
            <person name="Zhou H."/>
        </authorList>
    </citation>
    <scope>PHOSPHORYLATION [LARGE SCALE ANALYSIS] AT SER-82; SER-89 AND SER-651</scope>
    <scope>IDENTIFICATION BY MASS SPECTROMETRY [LARGE SCALE ANALYSIS]</scope>
</reference>
<reference key="5">
    <citation type="journal article" date="2009" name="Science">
        <title>Global analysis of Cdk1 substrate phosphorylation sites provides insights into evolution.</title>
        <authorList>
            <person name="Holt L.J."/>
            <person name="Tuch B.B."/>
            <person name="Villen J."/>
            <person name="Johnson A.D."/>
            <person name="Gygi S.P."/>
            <person name="Morgan D.O."/>
        </authorList>
    </citation>
    <scope>PHOSPHORYLATION [LARGE SCALE ANALYSIS] AT SER-483 AND SER-651</scope>
    <scope>IDENTIFICATION BY MASS SPECTROMETRY [LARGE SCALE ANALYSIS]</scope>
</reference>
<dbReference type="EMBL" id="U53879">
    <property type="protein sequence ID" value="AAB82383.1"/>
    <property type="molecule type" value="Genomic_DNA"/>
</dbReference>
<dbReference type="EMBL" id="Z73321">
    <property type="protein sequence ID" value="CAA97721.1"/>
    <property type="molecule type" value="Genomic_DNA"/>
</dbReference>
<dbReference type="EMBL" id="BK006945">
    <property type="protein sequence ID" value="DAA09460.1"/>
    <property type="molecule type" value="Genomic_DNA"/>
</dbReference>
<dbReference type="PIR" id="S64998">
    <property type="entry name" value="S64998"/>
</dbReference>
<dbReference type="BioGRID" id="31418">
    <property type="interactions" value="175"/>
</dbReference>
<dbReference type="ComplexPortal" id="CPX-7885">
    <property type="entry name" value="GID E3 ubiquitin ligase complex, GID11 variant"/>
</dbReference>
<dbReference type="FunCoup" id="Q99296">
    <property type="interactions" value="76"/>
</dbReference>
<dbReference type="IntAct" id="Q99296">
    <property type="interactions" value="7"/>
</dbReference>
<dbReference type="MINT" id="Q99296"/>
<dbReference type="STRING" id="4932.YLR149C"/>
<dbReference type="iPTMnet" id="Q99296"/>
<dbReference type="PaxDb" id="4932-YLR149C"/>
<dbReference type="PeptideAtlas" id="Q99296"/>
<dbReference type="TopDownProteomics" id="Q99296"/>
<dbReference type="EnsemblFungi" id="YLR149C_mRNA">
    <property type="protein sequence ID" value="YLR149C"/>
    <property type="gene ID" value="YLR149C"/>
</dbReference>
<dbReference type="KEGG" id="sce:YLR149C"/>
<dbReference type="AGR" id="SGD:S000004139"/>
<dbReference type="SGD" id="S000004139">
    <property type="gene designation" value="YLR149C"/>
</dbReference>
<dbReference type="VEuPathDB" id="FungiDB:YLR149C"/>
<dbReference type="eggNOG" id="KOG4532">
    <property type="taxonomic scope" value="Eukaryota"/>
</dbReference>
<dbReference type="HOGENOM" id="CLU_027079_0_0_1"/>
<dbReference type="InParanoid" id="Q99296"/>
<dbReference type="OMA" id="INSWARR"/>
<dbReference type="OrthoDB" id="418169at2759"/>
<dbReference type="BioCyc" id="YEAST:G3O-32285-MONOMER"/>
<dbReference type="BioGRID-ORCS" id="850841">
    <property type="hits" value="1 hit in 10 CRISPR screens"/>
</dbReference>
<dbReference type="PRO" id="PR:Q99296"/>
<dbReference type="Proteomes" id="UP000002311">
    <property type="component" value="Chromosome XII"/>
</dbReference>
<dbReference type="RNAct" id="Q99296">
    <property type="molecule type" value="protein"/>
</dbReference>
<dbReference type="Gene3D" id="2.130.10.10">
    <property type="entry name" value="YVTN repeat-like/Quinoprotein amine dehydrogenase"/>
    <property type="match status" value="1"/>
</dbReference>
<dbReference type="InterPro" id="IPR019417">
    <property type="entry name" value="DUF2415"/>
</dbReference>
<dbReference type="InterPro" id="IPR011044">
    <property type="entry name" value="Quino_amine_DH_bsu"/>
</dbReference>
<dbReference type="InterPro" id="IPR015943">
    <property type="entry name" value="WD40/YVTN_repeat-like_dom_sf"/>
</dbReference>
<dbReference type="PANTHER" id="PTHR43991:SF9">
    <property type="entry name" value="DUF2415 DOMAIN-CONTAINING PROTEIN"/>
    <property type="match status" value="1"/>
</dbReference>
<dbReference type="PANTHER" id="PTHR43991">
    <property type="entry name" value="WD REPEAT PROTEIN (AFU_ORTHOLOGUE AFUA_8G05640)-RELATED"/>
    <property type="match status" value="1"/>
</dbReference>
<dbReference type="Pfam" id="PF10313">
    <property type="entry name" value="DUF2415"/>
    <property type="match status" value="1"/>
</dbReference>
<dbReference type="SUPFAM" id="SSF50969">
    <property type="entry name" value="YVTN repeat-like/Quinoprotein amine dehydrogenase"/>
    <property type="match status" value="1"/>
</dbReference>
<accession>Q99296</accession>
<accession>D6VYE4</accession>
<evidence type="ECO:0000256" key="1">
    <source>
        <dbReference type="SAM" id="MobiDB-lite"/>
    </source>
</evidence>
<evidence type="ECO:0007744" key="2">
    <source>
    </source>
</evidence>
<evidence type="ECO:0007744" key="3">
    <source>
    </source>
</evidence>
<evidence type="ECO:0007744" key="4">
    <source>
    </source>
</evidence>
<feature type="chain" id="PRO_0000262875" description="Uncharacterized protein YLR149C">
    <location>
        <begin position="1"/>
        <end position="730"/>
    </location>
</feature>
<feature type="region of interest" description="Disordered" evidence="1">
    <location>
        <begin position="82"/>
        <end position="114"/>
    </location>
</feature>
<feature type="region of interest" description="Disordered" evidence="1">
    <location>
        <begin position="447"/>
        <end position="468"/>
    </location>
</feature>
<feature type="compositionally biased region" description="Polar residues" evidence="1">
    <location>
        <begin position="89"/>
        <end position="98"/>
    </location>
</feature>
<feature type="compositionally biased region" description="Low complexity" evidence="1">
    <location>
        <begin position="449"/>
        <end position="460"/>
    </location>
</feature>
<feature type="modified residue" description="Phosphoserine" evidence="2 3">
    <location>
        <position position="82"/>
    </location>
</feature>
<feature type="modified residue" description="Phosphoserine" evidence="3">
    <location>
        <position position="89"/>
    </location>
</feature>
<feature type="modified residue" description="Phosphoserine" evidence="4">
    <location>
        <position position="483"/>
    </location>
</feature>
<feature type="modified residue" description="Phosphoserine" evidence="3 4">
    <location>
        <position position="651"/>
    </location>
</feature>
<proteinExistence type="evidence at protein level"/>